<sequence length="325" mass="34982">MLVISANEQRNLVNMNEVIAYAALALKEFSAERTITPIRGSLPFANEKNTALIMPSVAEGLEALGLKVVTVVPENKKIGKKTINGIVMLSDFQTGEPLALLEGSYLTMIRTGALSGVATKHLARHNAKTLCIIGTGEQAKGIAEAVFAVRDIEKVILYNRTEEKAYAFSQYIQEKFGKPAYVHTNANEAISEADIIVTTTNASTPVFSEKLQKGVHVNAVGSFKPSMQELPSHAIVGANKVVVESKEAALDETGDLQVPIKEGLFKANAIHAELGQIISGEKAGRENDEEITVFKSVGLAVVDIIVAKYLYEKAVESGVGNKIEF</sequence>
<dbReference type="EC" id="1.5.1.49" evidence="1"/>
<dbReference type="EMBL" id="AE017355">
    <property type="protein sequence ID" value="AAT59164.1"/>
    <property type="molecule type" value="Genomic_DNA"/>
</dbReference>
<dbReference type="RefSeq" id="WP_000960294.1">
    <property type="nucleotide sequence ID" value="NC_005957.1"/>
</dbReference>
<dbReference type="RefSeq" id="YP_035143.1">
    <property type="nucleotide sequence ID" value="NC_005957.1"/>
</dbReference>
<dbReference type="SMR" id="Q6HMS8"/>
<dbReference type="KEGG" id="btk:BT9727_0800"/>
<dbReference type="PATRIC" id="fig|281309.8.peg.836"/>
<dbReference type="HOGENOM" id="CLU_042088_1_0_9"/>
<dbReference type="SABIO-RK" id="Q6HMS8"/>
<dbReference type="Proteomes" id="UP000001301">
    <property type="component" value="Chromosome"/>
</dbReference>
<dbReference type="GO" id="GO:0005737">
    <property type="term" value="C:cytoplasm"/>
    <property type="evidence" value="ECO:0007669"/>
    <property type="project" value="TreeGrafter"/>
</dbReference>
<dbReference type="GO" id="GO:0016491">
    <property type="term" value="F:oxidoreductase activity"/>
    <property type="evidence" value="ECO:0007669"/>
    <property type="project" value="UniProtKB-KW"/>
</dbReference>
<dbReference type="FunFam" id="3.30.1780.10:FF:000002">
    <property type="entry name" value="Ornithine cyclodeaminase"/>
    <property type="match status" value="1"/>
</dbReference>
<dbReference type="FunFam" id="3.40.50.720:FF:000311">
    <property type="entry name" value="Ornithine cyclodeaminase"/>
    <property type="match status" value="1"/>
</dbReference>
<dbReference type="Gene3D" id="3.40.50.720">
    <property type="entry name" value="NAD(P)-binding Rossmann-like Domain"/>
    <property type="match status" value="1"/>
</dbReference>
<dbReference type="Gene3D" id="3.30.1780.10">
    <property type="entry name" value="ornithine cyclodeaminase, domain 1"/>
    <property type="match status" value="1"/>
</dbReference>
<dbReference type="InterPro" id="IPR036291">
    <property type="entry name" value="NAD(P)-bd_dom_sf"/>
</dbReference>
<dbReference type="InterPro" id="IPR003462">
    <property type="entry name" value="ODC_Mu_crystall"/>
</dbReference>
<dbReference type="InterPro" id="IPR023401">
    <property type="entry name" value="ODC_N"/>
</dbReference>
<dbReference type="NCBIfam" id="NF006379">
    <property type="entry name" value="PRK08618.1"/>
    <property type="match status" value="1"/>
</dbReference>
<dbReference type="PANTHER" id="PTHR13812">
    <property type="entry name" value="KETIMINE REDUCTASE MU-CRYSTALLIN"/>
    <property type="match status" value="1"/>
</dbReference>
<dbReference type="PANTHER" id="PTHR13812:SF19">
    <property type="entry name" value="KETIMINE REDUCTASE MU-CRYSTALLIN"/>
    <property type="match status" value="1"/>
</dbReference>
<dbReference type="Pfam" id="PF02423">
    <property type="entry name" value="OCD_Mu_crystall"/>
    <property type="match status" value="1"/>
</dbReference>
<dbReference type="PIRSF" id="PIRSF001439">
    <property type="entry name" value="CryM"/>
    <property type="match status" value="1"/>
</dbReference>
<dbReference type="SUPFAM" id="SSF51735">
    <property type="entry name" value="NAD(P)-binding Rossmann-fold domains"/>
    <property type="match status" value="1"/>
</dbReference>
<protein>
    <recommendedName>
        <fullName>Delta(1)-pyrroline-2-carboxylate reductase</fullName>
        <shortName>Pyr2C reductase</shortName>
        <ecNumber evidence="1">1.5.1.49</ecNumber>
    </recommendedName>
    <alternativeName>
        <fullName evidence="2">Proline ketimine reductase</fullName>
    </alternativeName>
</protein>
<feature type="chain" id="PRO_0000432300" description="Delta(1)-pyrroline-2-carboxylate reductase">
    <location>
        <begin position="1"/>
        <end position="325"/>
    </location>
</feature>
<name>PY2CR_BACHK</name>
<organism>
    <name type="scientific">Bacillus thuringiensis subsp. konkukian (strain 97-27)</name>
    <dbReference type="NCBI Taxonomy" id="281309"/>
    <lineage>
        <taxon>Bacteria</taxon>
        <taxon>Bacillati</taxon>
        <taxon>Bacillota</taxon>
        <taxon>Bacilli</taxon>
        <taxon>Bacillales</taxon>
        <taxon>Bacillaceae</taxon>
        <taxon>Bacillus</taxon>
        <taxon>Bacillus cereus group</taxon>
    </lineage>
</organism>
<reference key="1">
    <citation type="journal article" date="2006" name="J. Bacteriol.">
        <title>Pathogenomic sequence analysis of Bacillus cereus and Bacillus thuringiensis isolates closely related to Bacillus anthracis.</title>
        <authorList>
            <person name="Han C.S."/>
            <person name="Xie G."/>
            <person name="Challacombe J.F."/>
            <person name="Altherr M.R."/>
            <person name="Bhotika S.S."/>
            <person name="Bruce D."/>
            <person name="Campbell C.S."/>
            <person name="Campbell M.L."/>
            <person name="Chen J."/>
            <person name="Chertkov O."/>
            <person name="Cleland C."/>
            <person name="Dimitrijevic M."/>
            <person name="Doggett N.A."/>
            <person name="Fawcett J.J."/>
            <person name="Glavina T."/>
            <person name="Goodwin L.A."/>
            <person name="Hill K.K."/>
            <person name="Hitchcock P."/>
            <person name="Jackson P.J."/>
            <person name="Keim P."/>
            <person name="Kewalramani A.R."/>
            <person name="Longmire J."/>
            <person name="Lucas S."/>
            <person name="Malfatti S."/>
            <person name="McMurry K."/>
            <person name="Meincke L.J."/>
            <person name="Misra M."/>
            <person name="Moseman B.L."/>
            <person name="Mundt M."/>
            <person name="Munk A.C."/>
            <person name="Okinaka R.T."/>
            <person name="Parson-Quintana B."/>
            <person name="Reilly L.P."/>
            <person name="Richardson P."/>
            <person name="Robinson D.L."/>
            <person name="Rubin E."/>
            <person name="Saunders E."/>
            <person name="Tapia R."/>
            <person name="Tesmer J.G."/>
            <person name="Thayer N."/>
            <person name="Thompson L.S."/>
            <person name="Tice H."/>
            <person name="Ticknor L.O."/>
            <person name="Wills P.L."/>
            <person name="Brettin T.S."/>
            <person name="Gilna P."/>
        </authorList>
    </citation>
    <scope>NUCLEOTIDE SEQUENCE [LARGE SCALE GENOMIC DNA]</scope>
    <source>
        <strain>97-27</strain>
    </source>
</reference>
<reference key="2">
    <citation type="journal article" date="2014" name="Elife">
        <title>Prediction and characterization of enzymatic activities guided by sequence similarity and genome neighborhood networks.</title>
        <authorList>
            <person name="Zhao S."/>
            <person name="Sakai A."/>
            <person name="Zhang X."/>
            <person name="Vetting M.W."/>
            <person name="Kumar R."/>
            <person name="Hillerich B."/>
            <person name="San Francisco B."/>
            <person name="Solbiati J."/>
            <person name="Steves A."/>
            <person name="Brown S."/>
            <person name="Akiva E."/>
            <person name="Barber A."/>
            <person name="Seidel R.D."/>
            <person name="Babbitt P.C."/>
            <person name="Almo S.C."/>
            <person name="Gerlt J.A."/>
            <person name="Jacobson M.P."/>
        </authorList>
    </citation>
    <scope>FUNCTION</scope>
    <scope>CATALYTIC ACTIVITY</scope>
    <scope>BIOPHYSICOCHEMICAL PROPERTIES</scope>
</reference>
<accession>Q6HMS8</accession>
<keyword id="KW-0520">NAD</keyword>
<keyword id="KW-0521">NADP</keyword>
<keyword id="KW-0560">Oxidoreductase</keyword>
<evidence type="ECO:0000269" key="1">
    <source>
    </source>
</evidence>
<evidence type="ECO:0000303" key="2">
    <source>
    </source>
</evidence>
<evidence type="ECO:0000305" key="3"/>
<evidence type="ECO:0000312" key="4">
    <source>
        <dbReference type="EMBL" id="AAT59164.1"/>
    </source>
</evidence>
<gene>
    <name evidence="4" type="primary">arcB</name>
    <name evidence="4" type="ordered locus">BT9727_0800</name>
</gene>
<comment type="function">
    <text evidence="1">Catalyzes the reduction of Delta(1)-pyrroline-2-carboxylate (Pyr2C) to L-proline, using preferentially NADPH over NADH as the electron donor. Is likely involved in a degradation pathway that converts trans-3-hydroxy-L-proline (t3LHyp) to L-proline.</text>
</comment>
<comment type="catalytic activity">
    <reaction evidence="1">
        <text>L-proline + NAD(+) = 1-pyrroline-2-carboxylate + NADH + H(+)</text>
        <dbReference type="Rhea" id="RHEA:20321"/>
        <dbReference type="ChEBI" id="CHEBI:15378"/>
        <dbReference type="ChEBI" id="CHEBI:39785"/>
        <dbReference type="ChEBI" id="CHEBI:57540"/>
        <dbReference type="ChEBI" id="CHEBI:57945"/>
        <dbReference type="ChEBI" id="CHEBI:60039"/>
        <dbReference type="EC" id="1.5.1.49"/>
    </reaction>
</comment>
<comment type="catalytic activity">
    <reaction evidence="1">
        <text>L-proline + NADP(+) = 1-pyrroline-2-carboxylate + NADPH + H(+)</text>
        <dbReference type="Rhea" id="RHEA:20317"/>
        <dbReference type="ChEBI" id="CHEBI:15378"/>
        <dbReference type="ChEBI" id="CHEBI:39785"/>
        <dbReference type="ChEBI" id="CHEBI:57783"/>
        <dbReference type="ChEBI" id="CHEBI:58349"/>
        <dbReference type="ChEBI" id="CHEBI:60039"/>
        <dbReference type="EC" id="1.5.1.49"/>
    </reaction>
</comment>
<comment type="biophysicochemical properties">
    <kinetics>
        <KM evidence="1">3.4 mM for Delta(1)-pyrroline-2-carboxylate (using NADPH as cosubstrate)</KM>
        <KM evidence="1">18 mM for Delta(1)-pyrroline-2-carboxylate (using NADH as cosubstrate)</KM>
        <text evidence="1">kcat is 11 sec(-1) for Pyr2C reduction using NADPH. kcat is 2.1 sec(-1) for Pyr2C reduction using NADH.</text>
    </kinetics>
</comment>
<comment type="similarity">
    <text evidence="3">Belongs to the ornithine cyclodeaminase/mu-crystallin family.</text>
</comment>
<proteinExistence type="evidence at protein level"/>